<gene>
    <name type="ordered locus">VF_2154</name>
</gene>
<feature type="chain" id="PRO_1000064372" description="UPF0231 protein VF_2154">
    <location>
        <begin position="1"/>
        <end position="122"/>
    </location>
</feature>
<comment type="similarity">
    <text evidence="1">Belongs to the UPF0231 family.</text>
</comment>
<evidence type="ECO:0000255" key="1">
    <source>
        <dbReference type="HAMAP-Rule" id="MF_01053"/>
    </source>
</evidence>
<keyword id="KW-1185">Reference proteome</keyword>
<protein>
    <recommendedName>
        <fullName evidence="1">UPF0231 protein VF_2154</fullName>
    </recommendedName>
</protein>
<accession>Q5E2U7</accession>
<proteinExistence type="inferred from homology"/>
<reference key="1">
    <citation type="journal article" date="2005" name="Proc. Natl. Acad. Sci. U.S.A.">
        <title>Complete genome sequence of Vibrio fischeri: a symbiotic bacterium with pathogenic congeners.</title>
        <authorList>
            <person name="Ruby E.G."/>
            <person name="Urbanowski M."/>
            <person name="Campbell J."/>
            <person name="Dunn A."/>
            <person name="Faini M."/>
            <person name="Gunsalus R."/>
            <person name="Lostroh P."/>
            <person name="Lupp C."/>
            <person name="McCann J."/>
            <person name="Millikan D."/>
            <person name="Schaefer A."/>
            <person name="Stabb E."/>
            <person name="Stevens A."/>
            <person name="Visick K."/>
            <person name="Whistler C."/>
            <person name="Greenberg E.P."/>
        </authorList>
    </citation>
    <scope>NUCLEOTIDE SEQUENCE [LARGE SCALE GENOMIC DNA]</scope>
    <source>
        <strain>ATCC 700601 / ES114</strain>
    </source>
</reference>
<dbReference type="EMBL" id="CP000020">
    <property type="protein sequence ID" value="AAW86649.1"/>
    <property type="molecule type" value="Genomic_DNA"/>
</dbReference>
<dbReference type="RefSeq" id="WP_005420832.1">
    <property type="nucleotide sequence ID" value="NZ_CAWLES010000001.1"/>
</dbReference>
<dbReference type="RefSeq" id="YP_205537.1">
    <property type="nucleotide sequence ID" value="NC_006840.2"/>
</dbReference>
<dbReference type="SMR" id="Q5E2U7"/>
<dbReference type="STRING" id="312309.VF_2154"/>
<dbReference type="EnsemblBacteria" id="AAW86649">
    <property type="protein sequence ID" value="AAW86649"/>
    <property type="gene ID" value="VF_2154"/>
</dbReference>
<dbReference type="GeneID" id="54164864"/>
<dbReference type="KEGG" id="vfi:VF_2154"/>
<dbReference type="PATRIC" id="fig|312309.11.peg.2196"/>
<dbReference type="eggNOG" id="COG3112">
    <property type="taxonomic scope" value="Bacteria"/>
</dbReference>
<dbReference type="HOGENOM" id="CLU_139226_0_0_6"/>
<dbReference type="OrthoDB" id="5739292at2"/>
<dbReference type="Proteomes" id="UP000000537">
    <property type="component" value="Chromosome I"/>
</dbReference>
<dbReference type="HAMAP" id="MF_01053">
    <property type="entry name" value="UPF0231"/>
    <property type="match status" value="1"/>
</dbReference>
<dbReference type="InterPro" id="IPR008249">
    <property type="entry name" value="UPF0231"/>
</dbReference>
<dbReference type="NCBIfam" id="NF003578">
    <property type="entry name" value="PRK05248.2-3"/>
    <property type="match status" value="1"/>
</dbReference>
<dbReference type="Pfam" id="PF06062">
    <property type="entry name" value="UPF0231"/>
    <property type="match status" value="1"/>
</dbReference>
<dbReference type="PIRSF" id="PIRSF006287">
    <property type="entry name" value="UCP006287"/>
    <property type="match status" value="1"/>
</dbReference>
<name>Y2154_ALIF1</name>
<sequence>MDYEFKKNTLEGTYHANFSMGHEAMGRWLVEDVAKNTDLLAEIYKHIALIKNTQDEWTLSGKVMTLVLSDQEVIVQENALFEQSDEEFEEDIHMYDDECISVCGLEDFETMLQSWEAFINRF</sequence>
<organism>
    <name type="scientific">Aliivibrio fischeri (strain ATCC 700601 / ES114)</name>
    <name type="common">Vibrio fischeri</name>
    <dbReference type="NCBI Taxonomy" id="312309"/>
    <lineage>
        <taxon>Bacteria</taxon>
        <taxon>Pseudomonadati</taxon>
        <taxon>Pseudomonadota</taxon>
        <taxon>Gammaproteobacteria</taxon>
        <taxon>Vibrionales</taxon>
        <taxon>Vibrionaceae</taxon>
        <taxon>Aliivibrio</taxon>
    </lineage>
</organism>